<gene>
    <name type="primary">CA1</name>
</gene>
<comment type="function">
    <text evidence="2">Catalyzes the reversible hydration of carbon dioxide. Can hydrate cyanamide to urea.</text>
</comment>
<comment type="catalytic activity">
    <reaction evidence="2">
        <text>hydrogencarbonate + H(+) = CO2 + H2O</text>
        <dbReference type="Rhea" id="RHEA:10748"/>
        <dbReference type="ChEBI" id="CHEBI:15377"/>
        <dbReference type="ChEBI" id="CHEBI:15378"/>
        <dbReference type="ChEBI" id="CHEBI:16526"/>
        <dbReference type="ChEBI" id="CHEBI:17544"/>
        <dbReference type="EC" id="4.2.1.1"/>
    </reaction>
</comment>
<comment type="catalytic activity">
    <reaction evidence="2">
        <text>urea = cyanamide + H2O</text>
        <dbReference type="Rhea" id="RHEA:23056"/>
        <dbReference type="ChEBI" id="CHEBI:15377"/>
        <dbReference type="ChEBI" id="CHEBI:16199"/>
        <dbReference type="ChEBI" id="CHEBI:16698"/>
        <dbReference type="EC" id="4.2.1.69"/>
    </reaction>
</comment>
<comment type="cofactor">
    <cofactor evidence="2">
        <name>Zn(2+)</name>
        <dbReference type="ChEBI" id="CHEBI:29105"/>
    </cofactor>
</comment>
<comment type="activity regulation">
    <text evidence="2">Inhibited by acetazolamide.</text>
</comment>
<comment type="subcellular location">
    <subcellularLocation>
        <location evidence="1">Cytoplasm</location>
    </subcellularLocation>
</comment>
<comment type="similarity">
    <text evidence="5">Belongs to the alpha-carbonic anhydrase family.</text>
</comment>
<keyword id="KW-0963">Cytoplasm</keyword>
<keyword id="KW-0456">Lyase</keyword>
<keyword id="KW-0479">Metal-binding</keyword>
<keyword id="KW-1185">Reference proteome</keyword>
<keyword id="KW-0862">Zinc</keyword>
<protein>
    <recommendedName>
        <fullName>Carbonic anhydrase 1</fullName>
        <ecNumber evidence="2">4.2.1.1</ecNumber>
    </recommendedName>
    <alternativeName>
        <fullName>Carbonate dehydratase I</fullName>
    </alternativeName>
    <alternativeName>
        <fullName>Carbonic anhydrase I</fullName>
        <shortName>CA-I</shortName>
    </alternativeName>
    <alternativeName>
        <fullName>Cyanamide hydratase CA1</fullName>
        <ecNumber evidence="2">4.2.1.69</ecNumber>
    </alternativeName>
</protein>
<accession>P07452</accession>
<organism>
    <name type="scientific">Oryctolagus cuniculus</name>
    <name type="common">Rabbit</name>
    <dbReference type="NCBI Taxonomy" id="9986"/>
    <lineage>
        <taxon>Eukaryota</taxon>
        <taxon>Metazoa</taxon>
        <taxon>Chordata</taxon>
        <taxon>Craniata</taxon>
        <taxon>Vertebrata</taxon>
        <taxon>Euteleostomi</taxon>
        <taxon>Mammalia</taxon>
        <taxon>Eutheria</taxon>
        <taxon>Euarchontoglires</taxon>
        <taxon>Glires</taxon>
        <taxon>Lagomorpha</taxon>
        <taxon>Leporidae</taxon>
        <taxon>Oryctolagus</taxon>
    </lineage>
</organism>
<reference key="1">
    <citation type="journal article" date="1985" name="Proc. Natl. Acad. Sci. U.S.A.">
        <title>Cloned cDNA for rabbit erythrocyte carbonic anhydrase I: a novel erythrocyte-specific probe to study development in erythroid tissues.</title>
        <authorList>
            <person name="Konialis C.P."/>
            <person name="Barlow J.H."/>
            <person name="Butterworth P.H.W."/>
        </authorList>
    </citation>
    <scope>NUCLEOTIDE SEQUENCE [MRNA]</scope>
</reference>
<proteinExistence type="evidence at transcript level"/>
<feature type="chain" id="PRO_0000077415" description="Carbonic anhydrase 1">
    <location>
        <begin position="1" status="less than"/>
        <end position="235"/>
    </location>
</feature>
<feature type="domain" description="Alpha-carbonic anhydrase" evidence="4">
    <location>
        <begin position="1"/>
        <end position="235"/>
    </location>
</feature>
<feature type="active site" description="Proton donor/acceptor" evidence="3">
    <location>
        <position position="40"/>
    </location>
</feature>
<feature type="binding site" evidence="2">
    <location>
        <position position="69"/>
    </location>
    <ligand>
        <name>Zn(2+)</name>
        <dbReference type="ChEBI" id="CHEBI:29105"/>
        <note>catalytic</note>
    </ligand>
</feature>
<feature type="binding site" evidence="2">
    <location>
        <position position="71"/>
    </location>
    <ligand>
        <name>Zn(2+)</name>
        <dbReference type="ChEBI" id="CHEBI:29105"/>
        <note>catalytic</note>
    </ligand>
</feature>
<feature type="binding site" evidence="2">
    <location>
        <position position="94"/>
    </location>
    <ligand>
        <name>Zn(2+)</name>
        <dbReference type="ChEBI" id="CHEBI:29105"/>
        <note>catalytic</note>
    </ligand>
</feature>
<feature type="binding site" evidence="3">
    <location>
        <begin position="174"/>
        <end position="175"/>
    </location>
    <ligand>
        <name>substrate</name>
    </ligand>
</feature>
<feature type="binding site" evidence="2">
    <location>
        <position position="174"/>
    </location>
    <ligand>
        <name>substrate</name>
    </ligand>
</feature>
<feature type="non-terminal residue">
    <location>
        <position position="1"/>
    </location>
</feature>
<dbReference type="EC" id="4.2.1.1" evidence="2"/>
<dbReference type="EC" id="4.2.1.69" evidence="2"/>
<dbReference type="EMBL" id="M10412">
    <property type="protein sequence ID" value="AAA31183.1"/>
    <property type="molecule type" value="mRNA"/>
</dbReference>
<dbReference type="PIR" id="A22962">
    <property type="entry name" value="A22962"/>
</dbReference>
<dbReference type="SMR" id="P07452"/>
<dbReference type="FunCoup" id="P07452">
    <property type="interactions" value="9"/>
</dbReference>
<dbReference type="STRING" id="9986.ENSOCUP00000004364"/>
<dbReference type="PaxDb" id="9986-ENSOCUP00000004364"/>
<dbReference type="eggNOG" id="KOG0382">
    <property type="taxonomic scope" value="Eukaryota"/>
</dbReference>
<dbReference type="InParanoid" id="P07452"/>
<dbReference type="Proteomes" id="UP000001811">
    <property type="component" value="Unplaced"/>
</dbReference>
<dbReference type="GO" id="GO:0005737">
    <property type="term" value="C:cytoplasm"/>
    <property type="evidence" value="ECO:0007669"/>
    <property type="project" value="UniProtKB-SubCell"/>
</dbReference>
<dbReference type="GO" id="GO:0004089">
    <property type="term" value="F:carbonate dehydratase activity"/>
    <property type="evidence" value="ECO:0000250"/>
    <property type="project" value="UniProtKB"/>
</dbReference>
<dbReference type="GO" id="GO:0018820">
    <property type="term" value="F:cyanamide hydratase activity"/>
    <property type="evidence" value="ECO:0000250"/>
    <property type="project" value="UniProtKB"/>
</dbReference>
<dbReference type="GO" id="GO:0008270">
    <property type="term" value="F:zinc ion binding"/>
    <property type="evidence" value="ECO:0007669"/>
    <property type="project" value="InterPro"/>
</dbReference>
<dbReference type="Gene3D" id="3.10.200.10">
    <property type="entry name" value="Alpha carbonic anhydrase"/>
    <property type="match status" value="1"/>
</dbReference>
<dbReference type="InterPro" id="IPR001148">
    <property type="entry name" value="CA_dom"/>
</dbReference>
<dbReference type="InterPro" id="IPR036398">
    <property type="entry name" value="CA_dom_sf"/>
</dbReference>
<dbReference type="InterPro" id="IPR023561">
    <property type="entry name" value="Carbonic_anhydrase_a-class"/>
</dbReference>
<dbReference type="InterPro" id="IPR018338">
    <property type="entry name" value="Carbonic_anhydrase_a-class_CS"/>
</dbReference>
<dbReference type="PANTHER" id="PTHR18952">
    <property type="entry name" value="CARBONIC ANHYDRASE"/>
    <property type="match status" value="1"/>
</dbReference>
<dbReference type="PANTHER" id="PTHR18952:SF282">
    <property type="entry name" value="CARBONIC ANHYDRASE 1"/>
    <property type="match status" value="1"/>
</dbReference>
<dbReference type="Pfam" id="PF00194">
    <property type="entry name" value="Carb_anhydrase"/>
    <property type="match status" value="1"/>
</dbReference>
<dbReference type="SMART" id="SM01057">
    <property type="entry name" value="Carb_anhydrase"/>
    <property type="match status" value="1"/>
</dbReference>
<dbReference type="SUPFAM" id="SSF51069">
    <property type="entry name" value="Carbonic anhydrase"/>
    <property type="match status" value="1"/>
</dbReference>
<dbReference type="PROSITE" id="PS00162">
    <property type="entry name" value="ALPHA_CA_1"/>
    <property type="match status" value="1"/>
</dbReference>
<dbReference type="PROSITE" id="PS51144">
    <property type="entry name" value="ALPHA_CA_2"/>
    <property type="match status" value="1"/>
</dbReference>
<name>CAH1_RABIT</name>
<sequence length="235" mass="25696">GNKQSPVDIKSSEVKHDTSLKPFSVSYNPASAKEIINVGHSFHVNFEDDSQSVLKGGPLSDNYRLSQFHFHWGKTDDYGSEHTVDGAKFSAELHLVHWNSGKYPNIADSVSKADGLAIVAVFLKVGQANPKLQKVLDALSAVKTKGKKASFTNFDPSTLLPPSLDYWTYSGSLTHPPLHESVTWLICKDSISISSEQLAQFRSLLSNAEGEAAVPILHNNRPPQPLKGRTVKASF</sequence>
<evidence type="ECO:0000250" key="1">
    <source>
        <dbReference type="UniProtKB" id="B0BNN3"/>
    </source>
</evidence>
<evidence type="ECO:0000250" key="2">
    <source>
        <dbReference type="UniProtKB" id="P00915"/>
    </source>
</evidence>
<evidence type="ECO:0000250" key="3">
    <source>
        <dbReference type="UniProtKB" id="P00918"/>
    </source>
</evidence>
<evidence type="ECO:0000255" key="4">
    <source>
        <dbReference type="PROSITE-ProRule" id="PRU01134"/>
    </source>
</evidence>
<evidence type="ECO:0000305" key="5"/>